<proteinExistence type="inferred from homology"/>
<feature type="chain" id="PRO_0000103015" description="SsrA-binding protein">
    <location>
        <begin position="1"/>
        <end position="157"/>
    </location>
</feature>
<feature type="region of interest" description="Disordered" evidence="2">
    <location>
        <begin position="132"/>
        <end position="157"/>
    </location>
</feature>
<feature type="compositionally biased region" description="Basic and acidic residues" evidence="2">
    <location>
        <begin position="135"/>
        <end position="151"/>
    </location>
</feature>
<gene>
    <name evidence="1" type="primary">smpB</name>
    <name type="ordered locus">RPA2688</name>
</gene>
<name>SSRP_RHOPA</name>
<sequence length="157" mass="18147">MAEKNERAIKVVAENRKARFNYAIDDTIEVGIALTGTEVKSIRNGKTTIAESYADARGSEIWLINANIPEYLQANRFNHEPKRPRKLLLHRKQINKLIGAVEREGMTLIPLKLYFNERGRAKLQLALAKGKKLHDKRETEKKRDWSREKGRLLRSRG</sequence>
<evidence type="ECO:0000255" key="1">
    <source>
        <dbReference type="HAMAP-Rule" id="MF_00023"/>
    </source>
</evidence>
<evidence type="ECO:0000256" key="2">
    <source>
        <dbReference type="SAM" id="MobiDB-lite"/>
    </source>
</evidence>
<reference key="1">
    <citation type="journal article" date="2004" name="Nat. Biotechnol.">
        <title>Complete genome sequence of the metabolically versatile photosynthetic bacterium Rhodopseudomonas palustris.</title>
        <authorList>
            <person name="Larimer F.W."/>
            <person name="Chain P."/>
            <person name="Hauser L."/>
            <person name="Lamerdin J.E."/>
            <person name="Malfatti S."/>
            <person name="Do L."/>
            <person name="Land M.L."/>
            <person name="Pelletier D.A."/>
            <person name="Beatty J.T."/>
            <person name="Lang A.S."/>
            <person name="Tabita F.R."/>
            <person name="Gibson J.L."/>
            <person name="Hanson T.E."/>
            <person name="Bobst C."/>
            <person name="Torres y Torres J.L."/>
            <person name="Peres C."/>
            <person name="Harrison F.H."/>
            <person name="Gibson J."/>
            <person name="Harwood C.S."/>
        </authorList>
    </citation>
    <scope>NUCLEOTIDE SEQUENCE [LARGE SCALE GENOMIC DNA]</scope>
    <source>
        <strain>ATCC BAA-98 / CGA009</strain>
    </source>
</reference>
<organism>
    <name type="scientific">Rhodopseudomonas palustris (strain ATCC BAA-98 / CGA009)</name>
    <dbReference type="NCBI Taxonomy" id="258594"/>
    <lineage>
        <taxon>Bacteria</taxon>
        <taxon>Pseudomonadati</taxon>
        <taxon>Pseudomonadota</taxon>
        <taxon>Alphaproteobacteria</taxon>
        <taxon>Hyphomicrobiales</taxon>
        <taxon>Nitrobacteraceae</taxon>
        <taxon>Rhodopseudomonas</taxon>
    </lineage>
</organism>
<dbReference type="EMBL" id="BX572601">
    <property type="protein sequence ID" value="CAE28129.1"/>
    <property type="molecule type" value="Genomic_DNA"/>
</dbReference>
<dbReference type="RefSeq" id="WP_011158238.1">
    <property type="nucleotide sequence ID" value="NZ_CP116810.1"/>
</dbReference>
<dbReference type="SMR" id="Q6N6C9"/>
<dbReference type="STRING" id="258594.RPA2688"/>
<dbReference type="GeneID" id="66893763"/>
<dbReference type="eggNOG" id="COG0691">
    <property type="taxonomic scope" value="Bacteria"/>
</dbReference>
<dbReference type="HOGENOM" id="CLU_108953_0_1_5"/>
<dbReference type="PhylomeDB" id="Q6N6C9"/>
<dbReference type="GO" id="GO:0005829">
    <property type="term" value="C:cytosol"/>
    <property type="evidence" value="ECO:0007669"/>
    <property type="project" value="TreeGrafter"/>
</dbReference>
<dbReference type="GO" id="GO:0003723">
    <property type="term" value="F:RNA binding"/>
    <property type="evidence" value="ECO:0007669"/>
    <property type="project" value="UniProtKB-UniRule"/>
</dbReference>
<dbReference type="GO" id="GO:0070929">
    <property type="term" value="P:trans-translation"/>
    <property type="evidence" value="ECO:0007669"/>
    <property type="project" value="UniProtKB-UniRule"/>
</dbReference>
<dbReference type="CDD" id="cd09294">
    <property type="entry name" value="SmpB"/>
    <property type="match status" value="1"/>
</dbReference>
<dbReference type="Gene3D" id="2.40.280.10">
    <property type="match status" value="1"/>
</dbReference>
<dbReference type="HAMAP" id="MF_00023">
    <property type="entry name" value="SmpB"/>
    <property type="match status" value="1"/>
</dbReference>
<dbReference type="InterPro" id="IPR023620">
    <property type="entry name" value="SmpB"/>
</dbReference>
<dbReference type="InterPro" id="IPR000037">
    <property type="entry name" value="SsrA-bd_prot"/>
</dbReference>
<dbReference type="NCBIfam" id="NF003843">
    <property type="entry name" value="PRK05422.1"/>
    <property type="match status" value="1"/>
</dbReference>
<dbReference type="NCBIfam" id="TIGR00086">
    <property type="entry name" value="smpB"/>
    <property type="match status" value="1"/>
</dbReference>
<dbReference type="PANTHER" id="PTHR30308:SF2">
    <property type="entry name" value="SSRA-BINDING PROTEIN"/>
    <property type="match status" value="1"/>
</dbReference>
<dbReference type="PANTHER" id="PTHR30308">
    <property type="entry name" value="TMRNA-BINDING COMPONENT OF TRANS-TRANSLATION TAGGING COMPLEX"/>
    <property type="match status" value="1"/>
</dbReference>
<dbReference type="Pfam" id="PF01668">
    <property type="entry name" value="SmpB"/>
    <property type="match status" value="1"/>
</dbReference>
<dbReference type="SUPFAM" id="SSF74982">
    <property type="entry name" value="Small protein B (SmpB)"/>
    <property type="match status" value="1"/>
</dbReference>
<comment type="function">
    <text evidence="1">Required for rescue of stalled ribosomes mediated by trans-translation. Binds to transfer-messenger RNA (tmRNA), required for stable association of tmRNA with ribosomes. tmRNA and SmpB together mimic tRNA shape, replacing the anticodon stem-loop with SmpB. tmRNA is encoded by the ssrA gene; the 2 termini fold to resemble tRNA(Ala) and it encodes a 'tag peptide', a short internal open reading frame. During trans-translation Ala-aminoacylated tmRNA acts like a tRNA, entering the A-site of stalled ribosomes, displacing the stalled mRNA. The ribosome then switches to translate the ORF on the tmRNA; the nascent peptide is terminated with the 'tag peptide' encoded by the tmRNA and targeted for degradation. The ribosome is freed to recommence translation, which seems to be the essential function of trans-translation.</text>
</comment>
<comment type="subcellular location">
    <subcellularLocation>
        <location evidence="1">Cytoplasm</location>
    </subcellularLocation>
    <text evidence="1">The tmRNA-SmpB complex associates with stalled 70S ribosomes.</text>
</comment>
<comment type="similarity">
    <text evidence="1">Belongs to the SmpB family.</text>
</comment>
<keyword id="KW-0963">Cytoplasm</keyword>
<keyword id="KW-0694">RNA-binding</keyword>
<protein>
    <recommendedName>
        <fullName evidence="1">SsrA-binding protein</fullName>
    </recommendedName>
    <alternativeName>
        <fullName evidence="1">Small protein B</fullName>
    </alternativeName>
</protein>
<accession>Q6N6C9</accession>